<sequence>MKSGRFIGVMSGTSLDGVDVVLATIDEHRVAQLASLSWPIPVSLKQAVLDICQGQQLTLSQFGQLDTQLGRLFADAVKALLKEQNLQARDIVAIGCHGQTVWHEPTGVAPHTLQIGDNNQIVARTGITVVGDFRRRDIALGGQGAPLVPAFHHALLAHPTERRMVLNIGGIANLSLLIPGQPVGGYDTGPGNMLMDAWIWRQAGKPYDKDAEWARAGKVILPLLQNMLSDPYFSQPAPKSTGREYFNYGWLERHLRHFPGVDPRDVQATLAELTAVTISEQVLLSGGCERLMVCGGGSRNPLLMARLAALLPGTEVTTTDAVGISGDDMEALAFAWLAWRTLAGLPGNLPSVTGASQETVLGAIFPANS</sequence>
<proteinExistence type="inferred from homology"/>
<dbReference type="EC" id="2.7.1.170" evidence="1"/>
<dbReference type="EMBL" id="CP001164">
    <property type="protein sequence ID" value="ACI36153.1"/>
    <property type="molecule type" value="Genomic_DNA"/>
</dbReference>
<dbReference type="RefSeq" id="WP_000835042.1">
    <property type="nucleotide sequence ID" value="NC_011353.1"/>
</dbReference>
<dbReference type="SMR" id="B5Z474"/>
<dbReference type="KEGG" id="ecf:ECH74115_2352"/>
<dbReference type="HOGENOM" id="CLU_038782_0_0_6"/>
<dbReference type="UniPathway" id="UPA00343"/>
<dbReference type="UniPathway" id="UPA00544"/>
<dbReference type="GO" id="GO:0005524">
    <property type="term" value="F:ATP binding"/>
    <property type="evidence" value="ECO:0007669"/>
    <property type="project" value="UniProtKB-UniRule"/>
</dbReference>
<dbReference type="GO" id="GO:0016301">
    <property type="term" value="F:kinase activity"/>
    <property type="evidence" value="ECO:0007669"/>
    <property type="project" value="UniProtKB-KW"/>
</dbReference>
<dbReference type="GO" id="GO:0016773">
    <property type="term" value="F:phosphotransferase activity, alcohol group as acceptor"/>
    <property type="evidence" value="ECO:0007669"/>
    <property type="project" value="UniProtKB-UniRule"/>
</dbReference>
<dbReference type="GO" id="GO:0097175">
    <property type="term" value="P:1,6-anhydro-N-acetyl-beta-muramic acid catabolic process"/>
    <property type="evidence" value="ECO:0007669"/>
    <property type="project" value="UniProtKB-UniRule"/>
</dbReference>
<dbReference type="GO" id="GO:0006040">
    <property type="term" value="P:amino sugar metabolic process"/>
    <property type="evidence" value="ECO:0007669"/>
    <property type="project" value="InterPro"/>
</dbReference>
<dbReference type="GO" id="GO:0009254">
    <property type="term" value="P:peptidoglycan turnover"/>
    <property type="evidence" value="ECO:0007669"/>
    <property type="project" value="UniProtKB-UniRule"/>
</dbReference>
<dbReference type="CDD" id="cd24050">
    <property type="entry name" value="ASKHA_NBD_ANMK"/>
    <property type="match status" value="1"/>
</dbReference>
<dbReference type="FunFam" id="3.30.420.40:FF:000090">
    <property type="entry name" value="Anhydro-N-acetylmuramic acid kinase"/>
    <property type="match status" value="1"/>
</dbReference>
<dbReference type="Gene3D" id="3.30.420.40">
    <property type="match status" value="2"/>
</dbReference>
<dbReference type="HAMAP" id="MF_01270">
    <property type="entry name" value="AnhMurNAc_kinase"/>
    <property type="match status" value="1"/>
</dbReference>
<dbReference type="InterPro" id="IPR005338">
    <property type="entry name" value="Anhydro_N_Ac-Mur_kinase"/>
</dbReference>
<dbReference type="InterPro" id="IPR043129">
    <property type="entry name" value="ATPase_NBD"/>
</dbReference>
<dbReference type="NCBIfam" id="NF007138">
    <property type="entry name" value="PRK09585.1-1"/>
    <property type="match status" value="1"/>
</dbReference>
<dbReference type="NCBIfam" id="NF007139">
    <property type="entry name" value="PRK09585.1-3"/>
    <property type="match status" value="1"/>
</dbReference>
<dbReference type="NCBIfam" id="NF007148">
    <property type="entry name" value="PRK09585.3-2"/>
    <property type="match status" value="1"/>
</dbReference>
<dbReference type="PANTHER" id="PTHR30605">
    <property type="entry name" value="ANHYDRO-N-ACETYLMURAMIC ACID KINASE"/>
    <property type="match status" value="1"/>
</dbReference>
<dbReference type="PANTHER" id="PTHR30605:SF0">
    <property type="entry name" value="ANHYDRO-N-ACETYLMURAMIC ACID KINASE"/>
    <property type="match status" value="1"/>
</dbReference>
<dbReference type="Pfam" id="PF03702">
    <property type="entry name" value="AnmK"/>
    <property type="match status" value="1"/>
</dbReference>
<dbReference type="SUPFAM" id="SSF53067">
    <property type="entry name" value="Actin-like ATPase domain"/>
    <property type="match status" value="1"/>
</dbReference>
<comment type="function">
    <text evidence="1">Catalyzes the specific phosphorylation of 1,6-anhydro-N-acetylmuramic acid (anhMurNAc) with the simultaneous cleavage of the 1,6-anhydro ring, generating MurNAc-6-P. Is required for the utilization of anhMurNAc either imported from the medium or derived from its own cell wall murein, and thus plays a role in cell wall recycling.</text>
</comment>
<comment type="catalytic activity">
    <reaction evidence="1">
        <text>1,6-anhydro-N-acetyl-beta-muramate + ATP + H2O = N-acetyl-D-muramate 6-phosphate + ADP + H(+)</text>
        <dbReference type="Rhea" id="RHEA:24952"/>
        <dbReference type="ChEBI" id="CHEBI:15377"/>
        <dbReference type="ChEBI" id="CHEBI:15378"/>
        <dbReference type="ChEBI" id="CHEBI:30616"/>
        <dbReference type="ChEBI" id="CHEBI:58690"/>
        <dbReference type="ChEBI" id="CHEBI:58722"/>
        <dbReference type="ChEBI" id="CHEBI:456216"/>
        <dbReference type="EC" id="2.7.1.170"/>
    </reaction>
</comment>
<comment type="pathway">
    <text evidence="1">Amino-sugar metabolism; 1,6-anhydro-N-acetylmuramate degradation.</text>
</comment>
<comment type="pathway">
    <text evidence="1">Cell wall biogenesis; peptidoglycan recycling.</text>
</comment>
<comment type="similarity">
    <text evidence="1">Belongs to the anhydro-N-acetylmuramic acid kinase family.</text>
</comment>
<reference key="1">
    <citation type="journal article" date="2011" name="Proc. Natl. Acad. Sci. U.S.A.">
        <title>Genomic anatomy of Escherichia coli O157:H7 outbreaks.</title>
        <authorList>
            <person name="Eppinger M."/>
            <person name="Mammel M.K."/>
            <person name="Leclerc J.E."/>
            <person name="Ravel J."/>
            <person name="Cebula T.A."/>
        </authorList>
    </citation>
    <scope>NUCLEOTIDE SEQUENCE [LARGE SCALE GENOMIC DNA]</scope>
    <source>
        <strain>EC4115 / EHEC</strain>
    </source>
</reference>
<name>ANMK_ECO5E</name>
<protein>
    <recommendedName>
        <fullName evidence="1">Anhydro-N-acetylmuramic acid kinase</fullName>
        <ecNumber evidence="1">2.7.1.170</ecNumber>
    </recommendedName>
    <alternativeName>
        <fullName evidence="1">AnhMurNAc kinase</fullName>
    </alternativeName>
</protein>
<keyword id="KW-0067">ATP-binding</keyword>
<keyword id="KW-0119">Carbohydrate metabolism</keyword>
<keyword id="KW-0418">Kinase</keyword>
<keyword id="KW-0547">Nucleotide-binding</keyword>
<keyword id="KW-0808">Transferase</keyword>
<evidence type="ECO:0000255" key="1">
    <source>
        <dbReference type="HAMAP-Rule" id="MF_01270"/>
    </source>
</evidence>
<feature type="chain" id="PRO_1000140154" description="Anhydro-N-acetylmuramic acid kinase">
    <location>
        <begin position="1"/>
        <end position="369"/>
    </location>
</feature>
<feature type="binding site" evidence="1">
    <location>
        <begin position="12"/>
        <end position="19"/>
    </location>
    <ligand>
        <name>ATP</name>
        <dbReference type="ChEBI" id="CHEBI:30616"/>
    </ligand>
</feature>
<gene>
    <name evidence="1" type="primary">anmK</name>
    <name type="ordered locus">ECH74115_2352</name>
</gene>
<organism>
    <name type="scientific">Escherichia coli O157:H7 (strain EC4115 / EHEC)</name>
    <dbReference type="NCBI Taxonomy" id="444450"/>
    <lineage>
        <taxon>Bacteria</taxon>
        <taxon>Pseudomonadati</taxon>
        <taxon>Pseudomonadota</taxon>
        <taxon>Gammaproteobacteria</taxon>
        <taxon>Enterobacterales</taxon>
        <taxon>Enterobacteriaceae</taxon>
        <taxon>Escherichia</taxon>
    </lineage>
</organism>
<accession>B5Z474</accession>